<comment type="function">
    <text evidence="1">Involved in coproporphyrin-dependent heme b biosynthesis. Catalyzes the insertion of ferrous iron into coproporphyrin III to form Fe-coproporphyrin III.</text>
</comment>
<comment type="catalytic activity">
    <reaction evidence="1">
        <text>Fe-coproporphyrin III + 2 H(+) = coproporphyrin III + Fe(2+)</text>
        <dbReference type="Rhea" id="RHEA:49572"/>
        <dbReference type="ChEBI" id="CHEBI:15378"/>
        <dbReference type="ChEBI" id="CHEBI:29033"/>
        <dbReference type="ChEBI" id="CHEBI:68438"/>
        <dbReference type="ChEBI" id="CHEBI:131725"/>
        <dbReference type="EC" id="4.99.1.9"/>
    </reaction>
    <physiologicalReaction direction="right-to-left" evidence="1">
        <dbReference type="Rhea" id="RHEA:49574"/>
    </physiologicalReaction>
</comment>
<comment type="pathway">
    <text evidence="1">Porphyrin-containing compound metabolism; protoheme biosynthesis.</text>
</comment>
<comment type="subcellular location">
    <subcellularLocation>
        <location evidence="1">Cytoplasm</location>
    </subcellularLocation>
</comment>
<comment type="similarity">
    <text evidence="1">Belongs to the ferrochelatase family.</text>
</comment>
<accession>Q73C98</accession>
<feature type="chain" id="PRO_0000175104" description="Coproporphyrin III ferrochelatase 1">
    <location>
        <begin position="1"/>
        <end position="311"/>
    </location>
</feature>
<feature type="binding site" description="axial binding residue" evidence="1">
    <location>
        <position position="12"/>
    </location>
    <ligand>
        <name>Fe-coproporphyrin III</name>
        <dbReference type="ChEBI" id="CHEBI:68438"/>
    </ligand>
    <ligandPart>
        <name>Fe</name>
        <dbReference type="ChEBI" id="CHEBI:18248"/>
    </ligandPart>
</feature>
<feature type="binding site" evidence="1">
    <location>
        <position position="29"/>
    </location>
    <ligand>
        <name>Fe-coproporphyrin III</name>
        <dbReference type="ChEBI" id="CHEBI:68438"/>
    </ligand>
</feature>
<feature type="binding site" evidence="1">
    <location>
        <begin position="45"/>
        <end position="46"/>
    </location>
    <ligand>
        <name>Fe-coproporphyrin III</name>
        <dbReference type="ChEBI" id="CHEBI:68438"/>
    </ligand>
</feature>
<feature type="binding site" evidence="1">
    <location>
        <position position="53"/>
    </location>
    <ligand>
        <name>Fe-coproporphyrin III</name>
        <dbReference type="ChEBI" id="CHEBI:68438"/>
    </ligand>
</feature>
<feature type="binding site" evidence="1">
    <location>
        <position position="124"/>
    </location>
    <ligand>
        <name>Fe-coproporphyrin III</name>
        <dbReference type="ChEBI" id="CHEBI:68438"/>
    </ligand>
</feature>
<feature type="binding site" evidence="1">
    <location>
        <position position="182"/>
    </location>
    <ligand>
        <name>Fe(2+)</name>
        <dbReference type="ChEBI" id="CHEBI:29033"/>
    </ligand>
</feature>
<feature type="binding site" evidence="1">
    <location>
        <position position="263"/>
    </location>
    <ligand>
        <name>Fe(2+)</name>
        <dbReference type="ChEBI" id="CHEBI:29033"/>
    </ligand>
</feature>
<sequence length="311" mass="35339">MKKKIGLLVMAYGTPYKEEDIERYYTHIRRGRKPSPEMLEDLTERYRAIGGISPLATITLEQAKKLEKRLNEVQDEVEYHMYLGLKHIEPFIEDAVKDMHNDGIQDAIALVLAPHYSTFSVKSYVGRAQEEAEKLGNLTIHGIDSWYKEPKFIQYWVDAVKGIYNGMSDAEREKAVLIVSAHSLPEKIIAMGDPYPEQLHETADYIARGAEVANYAVGWQSAGNTPDPWIGPDVQDLTRELNEKHGYTSFVYAPVGFVAEHLEVLYDNDFECKVVTDEIGAKYYRPEMPNASDAFIDCLTDVVLKKKESVL</sequence>
<proteinExistence type="inferred from homology"/>
<name>CPFC1_BACC1</name>
<evidence type="ECO:0000255" key="1">
    <source>
        <dbReference type="HAMAP-Rule" id="MF_00323"/>
    </source>
</evidence>
<dbReference type="EC" id="4.99.1.9" evidence="1"/>
<dbReference type="EMBL" id="AE017194">
    <property type="protein sequence ID" value="AAS40098.1"/>
    <property type="molecule type" value="Genomic_DNA"/>
</dbReference>
<dbReference type="SMR" id="Q73C98"/>
<dbReference type="KEGG" id="bca:BCE_1168"/>
<dbReference type="HOGENOM" id="CLU_018884_2_1_9"/>
<dbReference type="UniPathway" id="UPA00252"/>
<dbReference type="Proteomes" id="UP000002527">
    <property type="component" value="Chromosome"/>
</dbReference>
<dbReference type="GO" id="GO:0005737">
    <property type="term" value="C:cytoplasm"/>
    <property type="evidence" value="ECO:0007669"/>
    <property type="project" value="UniProtKB-SubCell"/>
</dbReference>
<dbReference type="GO" id="GO:0004325">
    <property type="term" value="F:ferrochelatase activity"/>
    <property type="evidence" value="ECO:0007669"/>
    <property type="project" value="UniProtKB-UniRule"/>
</dbReference>
<dbReference type="GO" id="GO:0046872">
    <property type="term" value="F:metal ion binding"/>
    <property type="evidence" value="ECO:0007669"/>
    <property type="project" value="UniProtKB-KW"/>
</dbReference>
<dbReference type="GO" id="GO:0006783">
    <property type="term" value="P:heme biosynthetic process"/>
    <property type="evidence" value="ECO:0007669"/>
    <property type="project" value="UniProtKB-UniRule"/>
</dbReference>
<dbReference type="CDD" id="cd00419">
    <property type="entry name" value="Ferrochelatase_C"/>
    <property type="match status" value="1"/>
</dbReference>
<dbReference type="CDD" id="cd03411">
    <property type="entry name" value="Ferrochelatase_N"/>
    <property type="match status" value="1"/>
</dbReference>
<dbReference type="FunFam" id="3.40.50.1400:FF:000009">
    <property type="entry name" value="Ferrochelatase"/>
    <property type="match status" value="1"/>
</dbReference>
<dbReference type="Gene3D" id="3.40.50.1400">
    <property type="match status" value="2"/>
</dbReference>
<dbReference type="HAMAP" id="MF_00323">
    <property type="entry name" value="Ferrochelatase"/>
    <property type="match status" value="1"/>
</dbReference>
<dbReference type="InterPro" id="IPR001015">
    <property type="entry name" value="Ferrochelatase"/>
</dbReference>
<dbReference type="InterPro" id="IPR019772">
    <property type="entry name" value="Ferrochelatase_AS"/>
</dbReference>
<dbReference type="InterPro" id="IPR033644">
    <property type="entry name" value="Ferrochelatase_C"/>
</dbReference>
<dbReference type="InterPro" id="IPR033659">
    <property type="entry name" value="Ferrochelatase_N"/>
</dbReference>
<dbReference type="NCBIfam" id="TIGR00109">
    <property type="entry name" value="hemH"/>
    <property type="match status" value="1"/>
</dbReference>
<dbReference type="NCBIfam" id="NF009095">
    <property type="entry name" value="PRK12435.1"/>
    <property type="match status" value="1"/>
</dbReference>
<dbReference type="PANTHER" id="PTHR11108">
    <property type="entry name" value="FERROCHELATASE"/>
    <property type="match status" value="1"/>
</dbReference>
<dbReference type="PANTHER" id="PTHR11108:SF1">
    <property type="entry name" value="FERROCHELATASE, MITOCHONDRIAL"/>
    <property type="match status" value="1"/>
</dbReference>
<dbReference type="Pfam" id="PF00762">
    <property type="entry name" value="Ferrochelatase"/>
    <property type="match status" value="1"/>
</dbReference>
<dbReference type="SUPFAM" id="SSF53800">
    <property type="entry name" value="Chelatase"/>
    <property type="match status" value="1"/>
</dbReference>
<dbReference type="PROSITE" id="PS00534">
    <property type="entry name" value="FERROCHELATASE"/>
    <property type="match status" value="1"/>
</dbReference>
<reference key="1">
    <citation type="journal article" date="2004" name="Nucleic Acids Res.">
        <title>The genome sequence of Bacillus cereus ATCC 10987 reveals metabolic adaptations and a large plasmid related to Bacillus anthracis pXO1.</title>
        <authorList>
            <person name="Rasko D.A."/>
            <person name="Ravel J."/>
            <person name="Oekstad O.A."/>
            <person name="Helgason E."/>
            <person name="Cer R.Z."/>
            <person name="Jiang L."/>
            <person name="Shores K.A."/>
            <person name="Fouts D.E."/>
            <person name="Tourasse N.J."/>
            <person name="Angiuoli S.V."/>
            <person name="Kolonay J.F."/>
            <person name="Nelson W.C."/>
            <person name="Kolstoe A.-B."/>
            <person name="Fraser C.M."/>
            <person name="Read T.D."/>
        </authorList>
    </citation>
    <scope>NUCLEOTIDE SEQUENCE [LARGE SCALE GENOMIC DNA]</scope>
    <source>
        <strain>ATCC 10987 / NRS 248</strain>
    </source>
</reference>
<gene>
    <name evidence="1" type="primary">cpfC1</name>
    <name type="ordered locus">BCE_1168</name>
</gene>
<protein>
    <recommendedName>
        <fullName evidence="1">Coproporphyrin III ferrochelatase 1</fullName>
        <ecNumber evidence="1">4.99.1.9</ecNumber>
    </recommendedName>
</protein>
<organism>
    <name type="scientific">Bacillus cereus (strain ATCC 10987 / NRS 248)</name>
    <dbReference type="NCBI Taxonomy" id="222523"/>
    <lineage>
        <taxon>Bacteria</taxon>
        <taxon>Bacillati</taxon>
        <taxon>Bacillota</taxon>
        <taxon>Bacilli</taxon>
        <taxon>Bacillales</taxon>
        <taxon>Bacillaceae</taxon>
        <taxon>Bacillus</taxon>
        <taxon>Bacillus cereus group</taxon>
    </lineage>
</organism>
<keyword id="KW-0963">Cytoplasm</keyword>
<keyword id="KW-0350">Heme biosynthesis</keyword>
<keyword id="KW-0408">Iron</keyword>
<keyword id="KW-0456">Lyase</keyword>
<keyword id="KW-0479">Metal-binding</keyword>
<keyword id="KW-0627">Porphyrin biosynthesis</keyword>